<dbReference type="EC" id="4.2.1.11" evidence="1"/>
<dbReference type="EMBL" id="CP001020">
    <property type="protein sequence ID" value="ACJ19638.1"/>
    <property type="molecule type" value="Genomic_DNA"/>
</dbReference>
<dbReference type="RefSeq" id="WP_005770583.1">
    <property type="nucleotide sequence ID" value="NC_011528.1"/>
</dbReference>
<dbReference type="SMR" id="B6J4X4"/>
<dbReference type="KEGG" id="cbc:CbuK_0336"/>
<dbReference type="HOGENOM" id="CLU_031223_2_1_6"/>
<dbReference type="UniPathway" id="UPA00109">
    <property type="reaction ID" value="UER00187"/>
</dbReference>
<dbReference type="GO" id="GO:0009986">
    <property type="term" value="C:cell surface"/>
    <property type="evidence" value="ECO:0007669"/>
    <property type="project" value="UniProtKB-SubCell"/>
</dbReference>
<dbReference type="GO" id="GO:0005576">
    <property type="term" value="C:extracellular region"/>
    <property type="evidence" value="ECO:0007669"/>
    <property type="project" value="UniProtKB-SubCell"/>
</dbReference>
<dbReference type="GO" id="GO:0000015">
    <property type="term" value="C:phosphopyruvate hydratase complex"/>
    <property type="evidence" value="ECO:0007669"/>
    <property type="project" value="InterPro"/>
</dbReference>
<dbReference type="GO" id="GO:0000287">
    <property type="term" value="F:magnesium ion binding"/>
    <property type="evidence" value="ECO:0007669"/>
    <property type="project" value="UniProtKB-UniRule"/>
</dbReference>
<dbReference type="GO" id="GO:0004634">
    <property type="term" value="F:phosphopyruvate hydratase activity"/>
    <property type="evidence" value="ECO:0007669"/>
    <property type="project" value="UniProtKB-UniRule"/>
</dbReference>
<dbReference type="GO" id="GO:0006096">
    <property type="term" value="P:glycolytic process"/>
    <property type="evidence" value="ECO:0007669"/>
    <property type="project" value="UniProtKB-UniRule"/>
</dbReference>
<dbReference type="CDD" id="cd03313">
    <property type="entry name" value="enolase"/>
    <property type="match status" value="1"/>
</dbReference>
<dbReference type="FunFam" id="3.20.20.120:FF:000001">
    <property type="entry name" value="Enolase"/>
    <property type="match status" value="1"/>
</dbReference>
<dbReference type="FunFam" id="3.30.390.10:FF:000001">
    <property type="entry name" value="Enolase"/>
    <property type="match status" value="1"/>
</dbReference>
<dbReference type="Gene3D" id="3.20.20.120">
    <property type="entry name" value="Enolase-like C-terminal domain"/>
    <property type="match status" value="1"/>
</dbReference>
<dbReference type="Gene3D" id="3.30.390.10">
    <property type="entry name" value="Enolase-like, N-terminal domain"/>
    <property type="match status" value="1"/>
</dbReference>
<dbReference type="HAMAP" id="MF_00318">
    <property type="entry name" value="Enolase"/>
    <property type="match status" value="1"/>
</dbReference>
<dbReference type="InterPro" id="IPR000941">
    <property type="entry name" value="Enolase"/>
</dbReference>
<dbReference type="InterPro" id="IPR036849">
    <property type="entry name" value="Enolase-like_C_sf"/>
</dbReference>
<dbReference type="InterPro" id="IPR029017">
    <property type="entry name" value="Enolase-like_N"/>
</dbReference>
<dbReference type="InterPro" id="IPR020810">
    <property type="entry name" value="Enolase_C"/>
</dbReference>
<dbReference type="InterPro" id="IPR020809">
    <property type="entry name" value="Enolase_CS"/>
</dbReference>
<dbReference type="InterPro" id="IPR020811">
    <property type="entry name" value="Enolase_N"/>
</dbReference>
<dbReference type="NCBIfam" id="TIGR01060">
    <property type="entry name" value="eno"/>
    <property type="match status" value="1"/>
</dbReference>
<dbReference type="PANTHER" id="PTHR11902">
    <property type="entry name" value="ENOLASE"/>
    <property type="match status" value="1"/>
</dbReference>
<dbReference type="PANTHER" id="PTHR11902:SF1">
    <property type="entry name" value="ENOLASE"/>
    <property type="match status" value="1"/>
</dbReference>
<dbReference type="Pfam" id="PF00113">
    <property type="entry name" value="Enolase_C"/>
    <property type="match status" value="1"/>
</dbReference>
<dbReference type="Pfam" id="PF03952">
    <property type="entry name" value="Enolase_N"/>
    <property type="match status" value="1"/>
</dbReference>
<dbReference type="PIRSF" id="PIRSF001400">
    <property type="entry name" value="Enolase"/>
    <property type="match status" value="1"/>
</dbReference>
<dbReference type="PRINTS" id="PR00148">
    <property type="entry name" value="ENOLASE"/>
</dbReference>
<dbReference type="SFLD" id="SFLDS00001">
    <property type="entry name" value="Enolase"/>
    <property type="match status" value="1"/>
</dbReference>
<dbReference type="SFLD" id="SFLDF00002">
    <property type="entry name" value="enolase"/>
    <property type="match status" value="1"/>
</dbReference>
<dbReference type="SMART" id="SM01192">
    <property type="entry name" value="Enolase_C"/>
    <property type="match status" value="1"/>
</dbReference>
<dbReference type="SMART" id="SM01193">
    <property type="entry name" value="Enolase_N"/>
    <property type="match status" value="1"/>
</dbReference>
<dbReference type="SUPFAM" id="SSF51604">
    <property type="entry name" value="Enolase C-terminal domain-like"/>
    <property type="match status" value="1"/>
</dbReference>
<dbReference type="SUPFAM" id="SSF54826">
    <property type="entry name" value="Enolase N-terminal domain-like"/>
    <property type="match status" value="1"/>
</dbReference>
<dbReference type="PROSITE" id="PS00164">
    <property type="entry name" value="ENOLASE"/>
    <property type="match status" value="1"/>
</dbReference>
<name>ENO_COXB1</name>
<sequence length="428" mass="46626">MTATITDINAHEILDSRANPTLEVRVTLSSQAYGCAAVPSGASTGEREAVELRDNDLERYGGKGVLQAVENVNGPIRDALLGQDPRSQEEIDRIMIELDGTENKANLGANAILGVSLAVAYAAANNADLPLYRYLGGDGGPFSMPVPMMNIINGGAHATNNLDFQEFMIVPVGAPTFAEALRYGAEVFHALKKRLVSRGLMSAVGDEGGFAPDLPNNEAAFELILEAIEDANYVPGKDIYLALDAASSELYQNGRYDFENNQLTSEEMIDRLTEWTKKYPVISIEDGLSENDWAGWKLLTERLENKVQLVGDDIFVTNPDILEKGIKKNIANAILVKLNQIGTLTETLATVGLAKSNKYGVIISHRSGETEDTTIADLAVATDARQIKTGSLCRSDRVAKYNRLLQIERELNDQAPYAGKEAFLFNRK</sequence>
<gene>
    <name evidence="1" type="primary">eno</name>
    <name type="ordered locus">CbuK_0336</name>
</gene>
<organism>
    <name type="scientific">Coxiella burnetii (strain CbuK_Q154)</name>
    <name type="common">Coxiella burnetii (strain Q154)</name>
    <dbReference type="NCBI Taxonomy" id="434924"/>
    <lineage>
        <taxon>Bacteria</taxon>
        <taxon>Pseudomonadati</taxon>
        <taxon>Pseudomonadota</taxon>
        <taxon>Gammaproteobacteria</taxon>
        <taxon>Legionellales</taxon>
        <taxon>Coxiellaceae</taxon>
        <taxon>Coxiella</taxon>
    </lineage>
</organism>
<keyword id="KW-0963">Cytoplasm</keyword>
<keyword id="KW-0324">Glycolysis</keyword>
<keyword id="KW-0456">Lyase</keyword>
<keyword id="KW-0460">Magnesium</keyword>
<keyword id="KW-0479">Metal-binding</keyword>
<keyword id="KW-0964">Secreted</keyword>
<proteinExistence type="inferred from homology"/>
<accession>B6J4X4</accession>
<comment type="function">
    <text evidence="1">Catalyzes the reversible conversion of 2-phosphoglycerate (2-PG) into phosphoenolpyruvate (PEP). It is essential for the degradation of carbohydrates via glycolysis.</text>
</comment>
<comment type="catalytic activity">
    <reaction evidence="1">
        <text>(2R)-2-phosphoglycerate = phosphoenolpyruvate + H2O</text>
        <dbReference type="Rhea" id="RHEA:10164"/>
        <dbReference type="ChEBI" id="CHEBI:15377"/>
        <dbReference type="ChEBI" id="CHEBI:58289"/>
        <dbReference type="ChEBI" id="CHEBI:58702"/>
        <dbReference type="EC" id="4.2.1.11"/>
    </reaction>
</comment>
<comment type="cofactor">
    <cofactor evidence="1">
        <name>Mg(2+)</name>
        <dbReference type="ChEBI" id="CHEBI:18420"/>
    </cofactor>
    <text evidence="1">Binds a second Mg(2+) ion via substrate during catalysis.</text>
</comment>
<comment type="pathway">
    <text evidence="1">Carbohydrate degradation; glycolysis; pyruvate from D-glyceraldehyde 3-phosphate: step 4/5.</text>
</comment>
<comment type="subunit">
    <text evidence="1">Component of the RNA degradosome, a multiprotein complex involved in RNA processing and mRNA degradation.</text>
</comment>
<comment type="subcellular location">
    <subcellularLocation>
        <location evidence="1">Cytoplasm</location>
    </subcellularLocation>
    <subcellularLocation>
        <location evidence="1">Secreted</location>
    </subcellularLocation>
    <subcellularLocation>
        <location evidence="1">Cell surface</location>
    </subcellularLocation>
    <text evidence="1">Fractions of enolase are present in both the cytoplasm and on the cell surface.</text>
</comment>
<comment type="similarity">
    <text evidence="1">Belongs to the enolase family.</text>
</comment>
<reference key="1">
    <citation type="journal article" date="2009" name="Infect. Immun.">
        <title>Comparative genomics reveal extensive transposon-mediated genomic plasticity and diversity among potential effector proteins within the genus Coxiella.</title>
        <authorList>
            <person name="Beare P.A."/>
            <person name="Unsworth N."/>
            <person name="Andoh M."/>
            <person name="Voth D.E."/>
            <person name="Omsland A."/>
            <person name="Gilk S.D."/>
            <person name="Williams K.P."/>
            <person name="Sobral B.W."/>
            <person name="Kupko J.J. III"/>
            <person name="Porcella S.F."/>
            <person name="Samuel J.E."/>
            <person name="Heinzen R.A."/>
        </authorList>
    </citation>
    <scope>NUCLEOTIDE SEQUENCE [LARGE SCALE GENOMIC DNA]</scope>
    <source>
        <strain>CbuK_Q154</strain>
    </source>
</reference>
<feature type="chain" id="PRO_1000115854" description="Enolase">
    <location>
        <begin position="1"/>
        <end position="428"/>
    </location>
</feature>
<feature type="active site" description="Proton donor" evidence="1">
    <location>
        <position position="207"/>
    </location>
</feature>
<feature type="active site" description="Proton acceptor" evidence="1">
    <location>
        <position position="337"/>
    </location>
</feature>
<feature type="binding site" evidence="1">
    <location>
        <position position="165"/>
    </location>
    <ligand>
        <name>(2R)-2-phosphoglycerate</name>
        <dbReference type="ChEBI" id="CHEBI:58289"/>
    </ligand>
</feature>
<feature type="binding site" evidence="1">
    <location>
        <position position="244"/>
    </location>
    <ligand>
        <name>Mg(2+)</name>
        <dbReference type="ChEBI" id="CHEBI:18420"/>
    </ligand>
</feature>
<feature type="binding site" evidence="1">
    <location>
        <position position="285"/>
    </location>
    <ligand>
        <name>Mg(2+)</name>
        <dbReference type="ChEBI" id="CHEBI:18420"/>
    </ligand>
</feature>
<feature type="binding site" evidence="1">
    <location>
        <position position="312"/>
    </location>
    <ligand>
        <name>Mg(2+)</name>
        <dbReference type="ChEBI" id="CHEBI:18420"/>
    </ligand>
</feature>
<feature type="binding site" evidence="1">
    <location>
        <position position="337"/>
    </location>
    <ligand>
        <name>(2R)-2-phosphoglycerate</name>
        <dbReference type="ChEBI" id="CHEBI:58289"/>
    </ligand>
</feature>
<feature type="binding site" evidence="1">
    <location>
        <position position="366"/>
    </location>
    <ligand>
        <name>(2R)-2-phosphoglycerate</name>
        <dbReference type="ChEBI" id="CHEBI:58289"/>
    </ligand>
</feature>
<feature type="binding site" evidence="1">
    <location>
        <position position="367"/>
    </location>
    <ligand>
        <name>(2R)-2-phosphoglycerate</name>
        <dbReference type="ChEBI" id="CHEBI:58289"/>
    </ligand>
</feature>
<feature type="binding site" evidence="1">
    <location>
        <position position="388"/>
    </location>
    <ligand>
        <name>(2R)-2-phosphoglycerate</name>
        <dbReference type="ChEBI" id="CHEBI:58289"/>
    </ligand>
</feature>
<evidence type="ECO:0000255" key="1">
    <source>
        <dbReference type="HAMAP-Rule" id="MF_00318"/>
    </source>
</evidence>
<protein>
    <recommendedName>
        <fullName evidence="1">Enolase</fullName>
        <ecNumber evidence="1">4.2.1.11</ecNumber>
    </recommendedName>
    <alternativeName>
        <fullName evidence="1">2-phospho-D-glycerate hydro-lyase</fullName>
    </alternativeName>
    <alternativeName>
        <fullName evidence="1">2-phosphoglycerate dehydratase</fullName>
    </alternativeName>
</protein>